<keyword id="KW-0028">Amino-acid biosynthesis</keyword>
<keyword id="KW-0061">Asparagine biosynthesis</keyword>
<keyword id="KW-0067">ATP-binding</keyword>
<keyword id="KW-0963">Cytoplasm</keyword>
<keyword id="KW-0436">Ligase</keyword>
<keyword id="KW-0547">Nucleotide-binding</keyword>
<dbReference type="EC" id="6.3.1.1" evidence="1"/>
<dbReference type="EMBL" id="CP001048">
    <property type="protein sequence ID" value="ACC91111.1"/>
    <property type="molecule type" value="Genomic_DNA"/>
</dbReference>
<dbReference type="RefSeq" id="WP_002212256.1">
    <property type="nucleotide sequence ID" value="NZ_CP009780.1"/>
</dbReference>
<dbReference type="SMR" id="B2K7I9"/>
<dbReference type="GeneID" id="57974591"/>
<dbReference type="KEGG" id="ypb:YPTS_4168"/>
<dbReference type="PATRIC" id="fig|502801.10.peg.3639"/>
<dbReference type="UniPathway" id="UPA00134">
    <property type="reaction ID" value="UER00194"/>
</dbReference>
<dbReference type="GO" id="GO:0005829">
    <property type="term" value="C:cytosol"/>
    <property type="evidence" value="ECO:0007669"/>
    <property type="project" value="TreeGrafter"/>
</dbReference>
<dbReference type="GO" id="GO:0004071">
    <property type="term" value="F:aspartate-ammonia ligase activity"/>
    <property type="evidence" value="ECO:0007669"/>
    <property type="project" value="UniProtKB-UniRule"/>
</dbReference>
<dbReference type="GO" id="GO:0005524">
    <property type="term" value="F:ATP binding"/>
    <property type="evidence" value="ECO:0007669"/>
    <property type="project" value="UniProtKB-UniRule"/>
</dbReference>
<dbReference type="GO" id="GO:0070981">
    <property type="term" value="P:L-asparagine biosynthetic process"/>
    <property type="evidence" value="ECO:0007669"/>
    <property type="project" value="UniProtKB-UniRule"/>
</dbReference>
<dbReference type="Gene3D" id="3.30.930.10">
    <property type="entry name" value="Bira Bifunctional Protein, Domain 2"/>
    <property type="match status" value="1"/>
</dbReference>
<dbReference type="HAMAP" id="MF_00555">
    <property type="entry name" value="AsnA"/>
    <property type="match status" value="1"/>
</dbReference>
<dbReference type="InterPro" id="IPR006195">
    <property type="entry name" value="aa-tRNA-synth_II"/>
</dbReference>
<dbReference type="InterPro" id="IPR045864">
    <property type="entry name" value="aa-tRNA-synth_II/BPL/LPL"/>
</dbReference>
<dbReference type="InterPro" id="IPR004618">
    <property type="entry name" value="AsnA"/>
</dbReference>
<dbReference type="NCBIfam" id="TIGR00669">
    <property type="entry name" value="asnA"/>
    <property type="match status" value="1"/>
</dbReference>
<dbReference type="PANTHER" id="PTHR30073">
    <property type="entry name" value="ASPARTATE--AMMONIA LIGASE"/>
    <property type="match status" value="1"/>
</dbReference>
<dbReference type="PANTHER" id="PTHR30073:SF5">
    <property type="entry name" value="ASPARTATE--AMMONIA LIGASE"/>
    <property type="match status" value="1"/>
</dbReference>
<dbReference type="Pfam" id="PF03590">
    <property type="entry name" value="AsnA"/>
    <property type="match status" value="1"/>
</dbReference>
<dbReference type="PIRSF" id="PIRSF001555">
    <property type="entry name" value="Asp_ammon_ligase"/>
    <property type="match status" value="1"/>
</dbReference>
<dbReference type="SUPFAM" id="SSF55681">
    <property type="entry name" value="Class II aaRS and biotin synthetases"/>
    <property type="match status" value="1"/>
</dbReference>
<dbReference type="PROSITE" id="PS50862">
    <property type="entry name" value="AA_TRNA_LIGASE_II"/>
    <property type="match status" value="1"/>
</dbReference>
<evidence type="ECO:0000255" key="1">
    <source>
        <dbReference type="HAMAP-Rule" id="MF_00555"/>
    </source>
</evidence>
<proteinExistence type="inferred from homology"/>
<name>ASNA_YERPB</name>
<protein>
    <recommendedName>
        <fullName evidence="1">Aspartate--ammonia ligase</fullName>
        <ecNumber evidence="1">6.3.1.1</ecNumber>
    </recommendedName>
    <alternativeName>
        <fullName evidence="1">Asparagine synthetase A</fullName>
    </alternativeName>
</protein>
<gene>
    <name evidence="1" type="primary">asnA</name>
    <name type="ordered locus">YPTS_4168</name>
</gene>
<feature type="chain" id="PRO_1000129138" description="Aspartate--ammonia ligase">
    <location>
        <begin position="1"/>
        <end position="330"/>
    </location>
</feature>
<reference key="1">
    <citation type="submission" date="2008-04" db="EMBL/GenBank/DDBJ databases">
        <title>Complete sequence of Yersinia pseudotuberculosis PB1/+.</title>
        <authorList>
            <person name="Copeland A."/>
            <person name="Lucas S."/>
            <person name="Lapidus A."/>
            <person name="Glavina del Rio T."/>
            <person name="Dalin E."/>
            <person name="Tice H."/>
            <person name="Bruce D."/>
            <person name="Goodwin L."/>
            <person name="Pitluck S."/>
            <person name="Munk A.C."/>
            <person name="Brettin T."/>
            <person name="Detter J.C."/>
            <person name="Han C."/>
            <person name="Tapia R."/>
            <person name="Schmutz J."/>
            <person name="Larimer F."/>
            <person name="Land M."/>
            <person name="Hauser L."/>
            <person name="Challacombe J.F."/>
            <person name="Green L."/>
            <person name="Lindler L.E."/>
            <person name="Nikolich M.P."/>
            <person name="Richardson P."/>
        </authorList>
    </citation>
    <scope>NUCLEOTIDE SEQUENCE [LARGE SCALE GENOMIC DNA]</scope>
    <source>
        <strain>PB1/+</strain>
    </source>
</reference>
<accession>B2K7I9</accession>
<comment type="catalytic activity">
    <reaction evidence="1">
        <text>L-aspartate + NH4(+) + ATP = L-asparagine + AMP + diphosphate + H(+)</text>
        <dbReference type="Rhea" id="RHEA:11372"/>
        <dbReference type="ChEBI" id="CHEBI:15378"/>
        <dbReference type="ChEBI" id="CHEBI:28938"/>
        <dbReference type="ChEBI" id="CHEBI:29991"/>
        <dbReference type="ChEBI" id="CHEBI:30616"/>
        <dbReference type="ChEBI" id="CHEBI:33019"/>
        <dbReference type="ChEBI" id="CHEBI:58048"/>
        <dbReference type="ChEBI" id="CHEBI:456215"/>
        <dbReference type="EC" id="6.3.1.1"/>
    </reaction>
</comment>
<comment type="pathway">
    <text evidence="1">Amino-acid biosynthesis; L-asparagine biosynthesis; L-asparagine from L-aspartate (ammonia route): step 1/1.</text>
</comment>
<comment type="subcellular location">
    <subcellularLocation>
        <location evidence="1">Cytoplasm</location>
    </subcellularLocation>
</comment>
<comment type="similarity">
    <text evidence="1">Belongs to the class-II aminoacyl-tRNA synthetase family. AsnA subfamily.</text>
</comment>
<sequence>MKKQFIQKQQQISFVKSFFSRQLEQQLGLIEVQAPILSRVGDGTQDNLSGSEKAVQVKVKSLPDSTFEVVHSLAKWKRKTLGRFDFGADQGVYTHMKALRPDEDRLSAIHSVYVDQWDWERVMGDGERNLAYLKSTVNKIYAAIKETEAAISAEFGVKPFLPDHIQFIHSESLRARFPDLDAKGRERAIAKELGAVFLIGIGGKLADGQSHDVRAPDYDDWTSPSAEGFSGLNGDIIVWNPILEDAFEISSMGIRVDAEALKRQLALTGDEDRLELEWHQSLLRGEMPQTIGGGIGQSRLVMLLLQKQHIGQVQCGVWGPEISEKVDGLL</sequence>
<organism>
    <name type="scientific">Yersinia pseudotuberculosis serotype IB (strain PB1/+)</name>
    <dbReference type="NCBI Taxonomy" id="502801"/>
    <lineage>
        <taxon>Bacteria</taxon>
        <taxon>Pseudomonadati</taxon>
        <taxon>Pseudomonadota</taxon>
        <taxon>Gammaproteobacteria</taxon>
        <taxon>Enterobacterales</taxon>
        <taxon>Yersiniaceae</taxon>
        <taxon>Yersinia</taxon>
    </lineage>
</organism>